<reference key="1">
    <citation type="journal article" date="1995" name="Microbiology">
        <title>The mob locus of Escherichia coli K12 required for molybdenum cofactor biosynthesis is expressed at very low levels.</title>
        <authorList>
            <person name="Iobbi-Nivol C."/>
            <person name="Palmer T."/>
            <person name="Whitty P.W."/>
            <person name="McNairn E."/>
            <person name="Boxer D.H."/>
        </authorList>
    </citation>
    <scope>NUCLEOTIDE SEQUENCE [GENOMIC DNA]</scope>
    <scope>PROTEIN SEQUENCE OF 2-8</scope>
    <scope>INDUCTION</scope>
    <source>
        <strain>K12</strain>
    </source>
</reference>
<reference key="2">
    <citation type="journal article" date="1993" name="Nucleic Acids Res.">
        <title>Analysis of the Escherichia coli genome. III. DNA sequence of the region from 87.2 to 89.2 minutes.</title>
        <authorList>
            <person name="Plunkett G. III"/>
            <person name="Burland V."/>
            <person name="Daniels D.L."/>
            <person name="Blattner F.R."/>
        </authorList>
    </citation>
    <scope>NUCLEOTIDE SEQUENCE [LARGE SCALE GENOMIC DNA]</scope>
    <source>
        <strain>K12 / MG1655 / ATCC 47076</strain>
    </source>
</reference>
<reference key="3">
    <citation type="journal article" date="1997" name="Science">
        <title>The complete genome sequence of Escherichia coli K-12.</title>
        <authorList>
            <person name="Blattner F.R."/>
            <person name="Plunkett G. III"/>
            <person name="Bloch C.A."/>
            <person name="Perna N.T."/>
            <person name="Burland V."/>
            <person name="Riley M."/>
            <person name="Collado-Vides J."/>
            <person name="Glasner J.D."/>
            <person name="Rode C.K."/>
            <person name="Mayhew G.F."/>
            <person name="Gregor J."/>
            <person name="Davis N.W."/>
            <person name="Kirkpatrick H.A."/>
            <person name="Goeden M.A."/>
            <person name="Rose D.J."/>
            <person name="Mau B."/>
            <person name="Shao Y."/>
        </authorList>
    </citation>
    <scope>NUCLEOTIDE SEQUENCE [LARGE SCALE GENOMIC DNA]</scope>
    <source>
        <strain>K12 / MG1655 / ATCC 47076</strain>
    </source>
</reference>
<reference key="4">
    <citation type="journal article" date="2006" name="Mol. Syst. Biol.">
        <title>Highly accurate genome sequences of Escherichia coli K-12 strains MG1655 and W3110.</title>
        <authorList>
            <person name="Hayashi K."/>
            <person name="Morooka N."/>
            <person name="Yamamoto Y."/>
            <person name="Fujita K."/>
            <person name="Isono K."/>
            <person name="Choi S."/>
            <person name="Ohtsubo E."/>
            <person name="Baba T."/>
            <person name="Wanner B.L."/>
            <person name="Mori H."/>
            <person name="Horiuchi T."/>
        </authorList>
    </citation>
    <scope>NUCLEOTIDE SEQUENCE [LARGE SCALE GENOMIC DNA]</scope>
    <source>
        <strain>K12 / W3110 / ATCC 27325 / DSM 5911</strain>
    </source>
</reference>
<reference key="5">
    <citation type="journal article" date="1997" name="Eur. J. Biochem.">
        <title>The product of the molybdenum cofactor gene mobB of Escherichia coli is a GTP-binding protein.</title>
        <authorList>
            <person name="Eaves D.J."/>
            <person name="Palmer T."/>
            <person name="Boxer D.H."/>
        </authorList>
    </citation>
    <scope>PROTEIN SEQUENCE OF 2-13</scope>
    <scope>GTP-BINDING</scope>
    <scope>GTPASE ACTIVITY</scope>
    <scope>FUNCTION</scope>
    <scope>SUBUNIT</scope>
    <source>
        <strain>K12 / JM109 / ATCC 53323</strain>
    </source>
</reference>
<reference key="6">
    <citation type="journal article" date="2000" name="J. Biol. Chem.">
        <title>Mechanism of assembly of the bis(molybdopterin guanine dinucleotide)molybdenum cofactor in Rhodobacter sphaeroides dimethyl sulfoxide reductase.</title>
        <authorList>
            <person name="Temple C.A."/>
            <person name="Rajagopalan K.V."/>
        </authorList>
    </citation>
    <scope>NO ROLE IN ACTIVATION OF DMSOR</scope>
    <source>
        <strain>K12 / MC4100 / ATCC 35695 / DSM 6574</strain>
    </source>
</reference>
<reference key="7">
    <citation type="journal article" date="2002" name="J. Biol. Chem.">
        <title>In vivo interactions between gene products involved in the final stages of molybdenum cofactor biosynthesis in Escherichia coli.</title>
        <authorList>
            <person name="Magalon A."/>
            <person name="Frixon C."/>
            <person name="Pommier J."/>
            <person name="Giordano G."/>
            <person name="Blasco F."/>
        </authorList>
    </citation>
    <scope>INTERACTION WITH MOBA; MOGA AND MOEA</scope>
    <source>
        <strain>K12 / MC4100 / ATCC 35695 / DSM 6574</strain>
    </source>
</reference>
<reference key="8">
    <citation type="journal article" date="2003" name="Acta Crystallogr. D">
        <title>Molecules of Escherichia coli MobB assemble into densely packed hollow cylinders in a crystal lattice with 75% solvent content.</title>
        <authorList>
            <person name="Rangarajan S.E."/>
            <person name="Tocilj A."/>
            <person name="Li Y."/>
            <person name="Iannuzzi P."/>
            <person name="Matte A."/>
            <person name="Cygler M."/>
        </authorList>
    </citation>
    <scope>X-RAY CRYSTALLOGRAPHY (2.80 ANGSTROMS) OF 6-174 IN COMPLEX WITH SULFATE</scope>
    <scope>SUBUNIT</scope>
</reference>
<reference key="9">
    <citation type="journal article" date="2003" name="J. Biol. Chem.">
        <title>Insight into the role of Escherichia coli MobB in molybdenum cofactor biosynthesis based on the high resolution crystal structure.</title>
        <authorList>
            <person name="McLuskey K."/>
            <person name="Harrison J.A."/>
            <person name="Schuttelkopf A.W."/>
            <person name="Boxer D.H."/>
            <person name="Hunter W.N."/>
        </authorList>
    </citation>
    <scope>X-RAY CRYSTALLOGRAPHY (1.90 ANGSTROMS) IN COMPLEX WITH SULFATE</scope>
    <scope>FUNCTION</scope>
    <scope>SUBUNIT</scope>
</reference>
<dbReference type="EMBL" id="L19201">
    <property type="protein sequence ID" value="AAB02991.1"/>
    <property type="status" value="ALT_INIT"/>
    <property type="molecule type" value="Genomic_DNA"/>
</dbReference>
<dbReference type="EMBL" id="U00096">
    <property type="protein sequence ID" value="AAC76854.2"/>
    <property type="molecule type" value="Genomic_DNA"/>
</dbReference>
<dbReference type="EMBL" id="AP009048">
    <property type="protein sequence ID" value="BAE77452.1"/>
    <property type="status" value="ALT_INIT"/>
    <property type="molecule type" value="Genomic_DNA"/>
</dbReference>
<dbReference type="PIR" id="S40802">
    <property type="entry name" value="S40802"/>
</dbReference>
<dbReference type="RefSeq" id="NP_418293.2">
    <property type="nucleotide sequence ID" value="NC_000913.3"/>
</dbReference>
<dbReference type="RefSeq" id="WP_000907622.1">
    <property type="nucleotide sequence ID" value="NZ_STEB01000017.1"/>
</dbReference>
<dbReference type="PDB" id="1NP6">
    <property type="method" value="X-ray"/>
    <property type="resolution" value="1.90 A"/>
    <property type="chains" value="A/B=2-175"/>
</dbReference>
<dbReference type="PDB" id="1P9N">
    <property type="method" value="X-ray"/>
    <property type="resolution" value="2.80 A"/>
    <property type="chains" value="A/B=6-175"/>
</dbReference>
<dbReference type="PDBsum" id="1NP6"/>
<dbReference type="PDBsum" id="1P9N"/>
<dbReference type="SMR" id="P32125"/>
<dbReference type="BioGRID" id="4262618">
    <property type="interactions" value="11"/>
</dbReference>
<dbReference type="BioGRID" id="852640">
    <property type="interactions" value="1"/>
</dbReference>
<dbReference type="DIP" id="DIP-10234N"/>
<dbReference type="FunCoup" id="P32125">
    <property type="interactions" value="47"/>
</dbReference>
<dbReference type="IntAct" id="P32125">
    <property type="interactions" value="4"/>
</dbReference>
<dbReference type="STRING" id="511145.b3856"/>
<dbReference type="jPOST" id="P32125"/>
<dbReference type="PaxDb" id="511145-b3856"/>
<dbReference type="EnsemblBacteria" id="AAC76854">
    <property type="protein sequence ID" value="AAC76854"/>
    <property type="gene ID" value="b3856"/>
</dbReference>
<dbReference type="GeneID" id="948343"/>
<dbReference type="KEGG" id="ecj:JW5575"/>
<dbReference type="KEGG" id="eco:b3856"/>
<dbReference type="KEGG" id="ecoc:C3026_20845"/>
<dbReference type="PATRIC" id="fig|1411691.4.peg.2859"/>
<dbReference type="EchoBASE" id="EB1775"/>
<dbReference type="eggNOG" id="COG1763">
    <property type="taxonomic scope" value="Bacteria"/>
</dbReference>
<dbReference type="HOGENOM" id="CLU_068199_2_1_6"/>
<dbReference type="InParanoid" id="P32125"/>
<dbReference type="OMA" id="HTHHNMD"/>
<dbReference type="OrthoDB" id="9804758at2"/>
<dbReference type="PhylomeDB" id="P32125"/>
<dbReference type="BioCyc" id="EcoCyc:EG11828-MONOMER"/>
<dbReference type="EvolutionaryTrace" id="P32125"/>
<dbReference type="PRO" id="PR:P32125"/>
<dbReference type="Proteomes" id="UP000000625">
    <property type="component" value="Chromosome"/>
</dbReference>
<dbReference type="GO" id="GO:0005525">
    <property type="term" value="F:GTP binding"/>
    <property type="evidence" value="ECO:0000314"/>
    <property type="project" value="EcoCyc"/>
</dbReference>
<dbReference type="GO" id="GO:0042803">
    <property type="term" value="F:protein homodimerization activity"/>
    <property type="evidence" value="ECO:0000314"/>
    <property type="project" value="EcoCyc"/>
</dbReference>
<dbReference type="GO" id="GO:0006777">
    <property type="term" value="P:Mo-molybdopterin cofactor biosynthetic process"/>
    <property type="evidence" value="ECO:0007669"/>
    <property type="project" value="UniProtKB-KW"/>
</dbReference>
<dbReference type="CDD" id="cd03116">
    <property type="entry name" value="MobB"/>
    <property type="match status" value="1"/>
</dbReference>
<dbReference type="FunFam" id="3.40.50.300:FF:000920">
    <property type="entry name" value="Molybdopterin-guanine dinucleotide biosynthesis protein B"/>
    <property type="match status" value="1"/>
</dbReference>
<dbReference type="Gene3D" id="3.40.50.300">
    <property type="entry name" value="P-loop containing nucleotide triphosphate hydrolases"/>
    <property type="match status" value="1"/>
</dbReference>
<dbReference type="InterPro" id="IPR052539">
    <property type="entry name" value="MGD_biosynthesis_adapter"/>
</dbReference>
<dbReference type="InterPro" id="IPR004435">
    <property type="entry name" value="MobB_dom"/>
</dbReference>
<dbReference type="InterPro" id="IPR027417">
    <property type="entry name" value="P-loop_NTPase"/>
</dbReference>
<dbReference type="NCBIfam" id="TIGR00176">
    <property type="entry name" value="mobB"/>
    <property type="match status" value="1"/>
</dbReference>
<dbReference type="NCBIfam" id="NF008021">
    <property type="entry name" value="PRK10751.1"/>
    <property type="match status" value="1"/>
</dbReference>
<dbReference type="PANTHER" id="PTHR40072:SF1">
    <property type="entry name" value="MOLYBDOPTERIN-GUANINE DINUCLEOTIDE BIOSYNTHESIS ADAPTER PROTEIN"/>
    <property type="match status" value="1"/>
</dbReference>
<dbReference type="PANTHER" id="PTHR40072">
    <property type="entry name" value="MOLYBDOPTERIN-GUANINE DINUCLEOTIDE BIOSYNTHESIS ADAPTER PROTEIN-RELATED"/>
    <property type="match status" value="1"/>
</dbReference>
<dbReference type="Pfam" id="PF03205">
    <property type="entry name" value="MobB"/>
    <property type="match status" value="1"/>
</dbReference>
<dbReference type="SUPFAM" id="SSF52540">
    <property type="entry name" value="P-loop containing nucleoside triphosphate hydrolases"/>
    <property type="match status" value="1"/>
</dbReference>
<gene>
    <name type="primary">mobB</name>
    <name type="synonym">yihC</name>
    <name type="ordered locus">b3856</name>
    <name type="ordered locus">JW5575</name>
</gene>
<name>MOBB_ECOLI</name>
<evidence type="ECO:0000255" key="1"/>
<evidence type="ECO:0000269" key="2">
    <source>
    </source>
</evidence>
<evidence type="ECO:0000269" key="3">
    <source>
    </source>
</evidence>
<evidence type="ECO:0000269" key="4">
    <source>
    </source>
</evidence>
<evidence type="ECO:0000269" key="5">
    <source>
    </source>
</evidence>
<evidence type="ECO:0000269" key="6">
    <source>
    </source>
</evidence>
<evidence type="ECO:0000305" key="7"/>
<evidence type="ECO:0007829" key="8">
    <source>
        <dbReference type="PDB" id="1NP6"/>
    </source>
</evidence>
<evidence type="ECO:0007829" key="9">
    <source>
        <dbReference type="PDB" id="1P9N"/>
    </source>
</evidence>
<comment type="function">
    <text evidence="3 6">GTP-binding protein that is not required for the biosynthesis of Mo-molybdopterin guanine dinucleotide (Mo-MGD) cofactor, and not necessary for the formation of active molybdoenzymes using this form of molybdenum cofactor. May act as an adapter protein to achieve the efficient biosynthesis and utilization of MGD. Displays a weak intrinsic GTPase activity. Is also able to bind the nucleotides ATP, TTP and GDP, but with lower affinity than GTP.</text>
</comment>
<comment type="biophysicochemical properties">
    <kinetics>
        <KM>7.5 uM for GTP</KM>
        <text>kcat is 0.003 min(-1) for the GTPase activity.</text>
    </kinetics>
</comment>
<comment type="subunit">
    <text evidence="2 3 4 6">Homodimer. Interacts with MobA, MogA and MoeA in vivo.</text>
</comment>
<comment type="interaction">
    <interactant intactId="EBI-879965">
        <id>P32125</id>
    </interactant>
    <interactant intactId="EBI-554376">
        <id>P30749</id>
        <label>moaE</label>
    </interactant>
    <organismsDiffer>false</organismsDiffer>
    <experiments>2</experiments>
</comment>
<comment type="induction">
    <text evidence="5">Is expressed at very low levels under both aerobic and anaerobic growth conditions.</text>
</comment>
<comment type="similarity">
    <text evidence="7">Belongs to the MobB family.</text>
</comment>
<comment type="sequence caution" evidence="7">
    <conflict type="erroneous initiation">
        <sequence resource="EMBL-CDS" id="AAB02991"/>
    </conflict>
    <text>Truncated N-terminus.</text>
</comment>
<comment type="sequence caution" evidence="7">
    <conflict type="erroneous initiation">
        <sequence resource="EMBL-CDS" id="BAE77452"/>
    </conflict>
    <text>Truncated N-terminus.</text>
</comment>
<sequence length="175" mass="19363">MAGKTMIPLLAFAAWSGTGKTTLLKKLIPALCARGIRPGLIKHTHHDMDVDKPGKDSYELRKAGAAQTIVASQQRWALMTETPDEEELDLQFLASRMDTSKLDLILVEGFKHEEIAKIVLFRDGAGHRPEELVIDRHVIAVASDVPLNLDVALLDINDVEGLADFVVEWMQKQNG</sequence>
<accession>P32125</accession>
<accession>P76770</accession>
<accession>Q2M8F4</accession>
<organism>
    <name type="scientific">Escherichia coli (strain K12)</name>
    <dbReference type="NCBI Taxonomy" id="83333"/>
    <lineage>
        <taxon>Bacteria</taxon>
        <taxon>Pseudomonadati</taxon>
        <taxon>Pseudomonadota</taxon>
        <taxon>Gammaproteobacteria</taxon>
        <taxon>Enterobacterales</taxon>
        <taxon>Enterobacteriaceae</taxon>
        <taxon>Escherichia</taxon>
    </lineage>
</organism>
<feature type="initiator methionine" description="Removed" evidence="5 6">
    <location>
        <position position="1"/>
    </location>
</feature>
<feature type="chain" id="PRO_0000096528" description="Molybdopterin-guanine dinucleotide biosynthesis adapter protein">
    <location>
        <begin position="2"/>
        <end position="175"/>
    </location>
</feature>
<feature type="binding site" evidence="7">
    <location>
        <begin position="17"/>
        <end position="21"/>
    </location>
    <ligand>
        <name>GTP</name>
        <dbReference type="ChEBI" id="CHEBI:37565"/>
    </ligand>
</feature>
<feature type="binding site" evidence="1">
    <location>
        <begin position="51"/>
        <end position="54"/>
    </location>
    <ligand>
        <name>GTP</name>
        <dbReference type="ChEBI" id="CHEBI:37565"/>
    </ligand>
</feature>
<feature type="binding site" evidence="1">
    <location>
        <begin position="100"/>
        <end position="103"/>
    </location>
    <ligand>
        <name>GTP</name>
        <dbReference type="ChEBI" id="CHEBI:37565"/>
    </ligand>
</feature>
<feature type="strand" evidence="8">
    <location>
        <begin position="9"/>
        <end position="13"/>
    </location>
</feature>
<feature type="strand" evidence="9">
    <location>
        <begin position="16"/>
        <end position="18"/>
    </location>
</feature>
<feature type="helix" evidence="8">
    <location>
        <begin position="20"/>
        <end position="33"/>
    </location>
</feature>
<feature type="strand" evidence="8">
    <location>
        <begin position="38"/>
        <end position="43"/>
    </location>
</feature>
<feature type="helix" evidence="8">
    <location>
        <begin position="54"/>
        <end position="58"/>
    </location>
</feature>
<feature type="helix" evidence="8">
    <location>
        <begin position="60"/>
        <end position="63"/>
    </location>
</feature>
<feature type="strand" evidence="8">
    <location>
        <begin position="66"/>
        <end position="71"/>
    </location>
</feature>
<feature type="strand" evidence="8">
    <location>
        <begin position="73"/>
        <end position="81"/>
    </location>
</feature>
<feature type="strand" evidence="8">
    <location>
        <begin position="83"/>
        <end position="85"/>
    </location>
</feature>
<feature type="helix" evidence="8">
    <location>
        <begin position="90"/>
        <end position="96"/>
    </location>
</feature>
<feature type="helix" evidence="8">
    <location>
        <begin position="99"/>
        <end position="101"/>
    </location>
</feature>
<feature type="strand" evidence="8">
    <location>
        <begin position="103"/>
        <end position="109"/>
    </location>
</feature>
<feature type="strand" evidence="8">
    <location>
        <begin position="115"/>
        <end position="121"/>
    </location>
</feature>
<feature type="helix" evidence="8">
    <location>
        <begin position="129"/>
        <end position="131"/>
    </location>
</feature>
<feature type="strand" evidence="8">
    <location>
        <begin position="138"/>
        <end position="145"/>
    </location>
</feature>
<feature type="strand" evidence="8">
    <location>
        <begin position="150"/>
        <end position="155"/>
    </location>
</feature>
<feature type="helix" evidence="8">
    <location>
        <begin position="159"/>
        <end position="170"/>
    </location>
</feature>
<proteinExistence type="evidence at protein level"/>
<protein>
    <recommendedName>
        <fullName>Molybdopterin-guanine dinucleotide biosynthesis adapter protein</fullName>
        <shortName>MGD biosynthesis adapter protein</shortName>
    </recommendedName>
    <alternativeName>
        <fullName>Molybdenum cofactor biosynthesis adapter protein</fullName>
        <shortName>Moco biosynthesis adapter protein</shortName>
    </alternativeName>
    <alternativeName>
        <fullName>Molybdopterin-guanine dinucleotide biosynthesis protein B</fullName>
    </alternativeName>
</protein>
<keyword id="KW-0002">3D-structure</keyword>
<keyword id="KW-0903">Direct protein sequencing</keyword>
<keyword id="KW-0342">GTP-binding</keyword>
<keyword id="KW-0501">Molybdenum cofactor biosynthesis</keyword>
<keyword id="KW-0547">Nucleotide-binding</keyword>
<keyword id="KW-1185">Reference proteome</keyword>